<dbReference type="EC" id="4.1.3.-" evidence="1"/>
<dbReference type="EMBL" id="AB011838">
    <property type="protein sequence ID" value="BAA75345.1"/>
    <property type="molecule type" value="Genomic_DNA"/>
</dbReference>
<dbReference type="EMBL" id="BA000004">
    <property type="protein sequence ID" value="BAB07641.1"/>
    <property type="molecule type" value="Genomic_DNA"/>
</dbReference>
<dbReference type="PIR" id="B84140">
    <property type="entry name" value="B84140"/>
</dbReference>
<dbReference type="RefSeq" id="WP_010900047.1">
    <property type="nucleotide sequence ID" value="NC_002570.2"/>
</dbReference>
<dbReference type="SMR" id="Q9Z9T7"/>
<dbReference type="STRING" id="272558.gene:10729835"/>
<dbReference type="KEGG" id="bha:BH3922"/>
<dbReference type="eggNOG" id="COG2513">
    <property type="taxonomic scope" value="Bacteria"/>
</dbReference>
<dbReference type="HOGENOM" id="CLU_027389_3_2_9"/>
<dbReference type="OrthoDB" id="8629576at2"/>
<dbReference type="Proteomes" id="UP000001258">
    <property type="component" value="Chromosome"/>
</dbReference>
<dbReference type="GO" id="GO:0046872">
    <property type="term" value="F:metal ion binding"/>
    <property type="evidence" value="ECO:0007669"/>
    <property type="project" value="UniProtKB-KW"/>
</dbReference>
<dbReference type="GO" id="GO:0046421">
    <property type="term" value="F:methylisocitrate lyase activity"/>
    <property type="evidence" value="ECO:0007669"/>
    <property type="project" value="InterPro"/>
</dbReference>
<dbReference type="GO" id="GO:0019629">
    <property type="term" value="P:propionate catabolic process, 2-methylcitrate cycle"/>
    <property type="evidence" value="ECO:0007669"/>
    <property type="project" value="InterPro"/>
</dbReference>
<dbReference type="CDD" id="cd00377">
    <property type="entry name" value="ICL_PEPM"/>
    <property type="match status" value="1"/>
</dbReference>
<dbReference type="FunFam" id="3.20.20.60:FF:000009">
    <property type="entry name" value="2-methylisocitrate lyase"/>
    <property type="match status" value="1"/>
</dbReference>
<dbReference type="Gene3D" id="3.20.20.60">
    <property type="entry name" value="Phosphoenolpyruvate-binding domains"/>
    <property type="match status" value="1"/>
</dbReference>
<dbReference type="InterPro" id="IPR039556">
    <property type="entry name" value="ICL/PEPM"/>
</dbReference>
<dbReference type="InterPro" id="IPR018523">
    <property type="entry name" value="Isocitrate_lyase_ph_CS"/>
</dbReference>
<dbReference type="InterPro" id="IPR012695">
    <property type="entry name" value="PrpB"/>
</dbReference>
<dbReference type="InterPro" id="IPR015813">
    <property type="entry name" value="Pyrv/PenolPyrv_kinase-like_dom"/>
</dbReference>
<dbReference type="InterPro" id="IPR040442">
    <property type="entry name" value="Pyrv_kinase-like_dom_sf"/>
</dbReference>
<dbReference type="NCBIfam" id="TIGR02317">
    <property type="entry name" value="prpB"/>
    <property type="match status" value="1"/>
</dbReference>
<dbReference type="PANTHER" id="PTHR42905:SF5">
    <property type="entry name" value="CARBOXYVINYL-CARBOXYPHOSPHONATE PHOSPHORYLMUTASE, CHLOROPLASTIC"/>
    <property type="match status" value="1"/>
</dbReference>
<dbReference type="PANTHER" id="PTHR42905">
    <property type="entry name" value="PHOSPHOENOLPYRUVATE CARBOXYLASE"/>
    <property type="match status" value="1"/>
</dbReference>
<dbReference type="Pfam" id="PF13714">
    <property type="entry name" value="PEP_mutase"/>
    <property type="match status" value="1"/>
</dbReference>
<dbReference type="SUPFAM" id="SSF51621">
    <property type="entry name" value="Phosphoenolpyruvate/pyruvate domain"/>
    <property type="match status" value="1"/>
</dbReference>
<dbReference type="PROSITE" id="PS00161">
    <property type="entry name" value="ISOCITRATE_LYASE"/>
    <property type="match status" value="1"/>
</dbReference>
<evidence type="ECO:0000250" key="1">
    <source>
        <dbReference type="UniProtKB" id="P54528"/>
    </source>
</evidence>
<evidence type="ECO:0000250" key="2">
    <source>
        <dbReference type="UniProtKB" id="P77541"/>
    </source>
</evidence>
<evidence type="ECO:0000305" key="3"/>
<sequence length="300" mass="32612">MAWIVEQPKSQKELADRFRQLMKEEAILQIPGAHDAMAALVAKKAGFSALYLSGDAYTASRGLPDLGIVTSTEVADRAKDLVRATNLPVLVDIDTGFGGVLNVARTAQEMLEANVAAVQIEDQQLPKKCGHLNGKQLVSKEEMEQKIQAIKKVAPTLVIVARTDARANEGLNGAIERANVYIEAGADAIFPEALQSAEEFRLVAENVSAPLLANMTEFGKTPLMTAGGLQNAGFQMVIYPVTSLRVAAKAYERIFQLIKDEGTQEAGIEDMQTRKELYETISYDDFEALDKNIAKTVLGE</sequence>
<comment type="function">
    <text evidence="1">Involved in the methylcitric acid cycle. Catalyzes the cleavage of 2-methylisocitrate to yield pyruvate and succinate.</text>
</comment>
<comment type="catalytic activity">
    <reaction evidence="1">
        <text>3-hydroxybutane-1,2,3-tricarboxylate = pyruvate + succinate</text>
        <dbReference type="Rhea" id="RHEA:57504"/>
        <dbReference type="ChEBI" id="CHEBI:15361"/>
        <dbReference type="ChEBI" id="CHEBI:30031"/>
        <dbReference type="ChEBI" id="CHEBI:141790"/>
    </reaction>
</comment>
<comment type="cofactor">
    <cofactor evidence="2">
        <name>Mg(2+)</name>
        <dbReference type="ChEBI" id="CHEBI:18420"/>
    </cofactor>
</comment>
<comment type="similarity">
    <text evidence="3">Belongs to the isocitrate lyase/PEP mutase superfamily. Methylisocitrate lyase family.</text>
</comment>
<protein>
    <recommendedName>
        <fullName evidence="1">2-methylisocitrate lyase</fullName>
        <shortName evidence="1">2-MIC</shortName>
        <shortName evidence="1">MICL</shortName>
        <ecNumber evidence="1">4.1.3.-</ecNumber>
    </recommendedName>
</protein>
<keyword id="KW-0456">Lyase</keyword>
<keyword id="KW-0460">Magnesium</keyword>
<keyword id="KW-0479">Metal-binding</keyword>
<keyword id="KW-1185">Reference proteome</keyword>
<proteinExistence type="inferred from homology"/>
<reference key="1">
    <citation type="journal article" date="1999" name="Extremophiles">
        <title>Sequencing of three lambda clones from the genome of alkaliphilic Bacillus sp. strain C-125.</title>
        <authorList>
            <person name="Takami H."/>
            <person name="Nakasone K."/>
            <person name="Ogasawara N."/>
            <person name="Hirama C."/>
            <person name="Nakamura Y."/>
            <person name="Masui N."/>
            <person name="Fuji F."/>
            <person name="Takaki Y."/>
            <person name="Inoue A."/>
            <person name="Horikoshi K."/>
        </authorList>
    </citation>
    <scope>NUCLEOTIDE SEQUENCE [GENOMIC DNA]</scope>
    <source>
        <strain>ATCC BAA-125 / DSM 18197 / FERM 7344 / JCM 9153 / C-125</strain>
    </source>
</reference>
<reference key="2">
    <citation type="journal article" date="2000" name="Nucleic Acids Res.">
        <title>Complete genome sequence of the alkaliphilic bacterium Bacillus halodurans and genomic sequence comparison with Bacillus subtilis.</title>
        <authorList>
            <person name="Takami H."/>
            <person name="Nakasone K."/>
            <person name="Takaki Y."/>
            <person name="Maeno G."/>
            <person name="Sasaki R."/>
            <person name="Masui N."/>
            <person name="Fuji F."/>
            <person name="Hirama C."/>
            <person name="Nakamura Y."/>
            <person name="Ogasawara N."/>
            <person name="Kuhara S."/>
            <person name="Horikoshi K."/>
        </authorList>
    </citation>
    <scope>NUCLEOTIDE SEQUENCE [LARGE SCALE GENOMIC DNA]</scope>
    <source>
        <strain>ATCC BAA-125 / DSM 18197 / FERM 7344 / JCM 9153 / C-125</strain>
    </source>
</reference>
<name>MMGF_HALH5</name>
<organism>
    <name type="scientific">Halalkalibacterium halodurans (strain ATCC BAA-125 / DSM 18197 / FERM 7344 / JCM 9153 / C-125)</name>
    <name type="common">Bacillus halodurans</name>
    <dbReference type="NCBI Taxonomy" id="272558"/>
    <lineage>
        <taxon>Bacteria</taxon>
        <taxon>Bacillati</taxon>
        <taxon>Bacillota</taxon>
        <taxon>Bacilli</taxon>
        <taxon>Bacillales</taxon>
        <taxon>Bacillaceae</taxon>
        <taxon>Halalkalibacterium (ex Joshi et al. 2022)</taxon>
    </lineage>
</organism>
<accession>Q9Z9T7</accession>
<accession>Q9JPV3</accession>
<feature type="chain" id="PRO_0000068819" description="2-methylisocitrate lyase">
    <location>
        <begin position="1"/>
        <end position="300"/>
    </location>
</feature>
<feature type="binding site" evidence="2">
    <location>
        <begin position="53"/>
        <end position="55"/>
    </location>
    <ligand>
        <name>substrate</name>
    </ligand>
</feature>
<feature type="binding site" evidence="2">
    <location>
        <position position="92"/>
    </location>
    <ligand>
        <name>Mg(2+)</name>
        <dbReference type="ChEBI" id="CHEBI:18420"/>
    </ligand>
</feature>
<feature type="binding site" evidence="2">
    <location>
        <position position="94"/>
    </location>
    <ligand>
        <name>Mg(2+)</name>
        <dbReference type="ChEBI" id="CHEBI:18420"/>
    </ligand>
</feature>
<feature type="binding site" evidence="2">
    <location>
        <begin position="129"/>
        <end position="130"/>
    </location>
    <ligand>
        <name>substrate</name>
    </ligand>
</feature>
<feature type="binding site" evidence="2">
    <location>
        <position position="162"/>
    </location>
    <ligand>
        <name>substrate</name>
    </ligand>
</feature>
<feature type="binding site" evidence="2">
    <location>
        <position position="192"/>
    </location>
    <ligand>
        <name>substrate</name>
    </ligand>
</feature>
<feature type="binding site" evidence="2">
    <location>
        <begin position="214"/>
        <end position="216"/>
    </location>
    <ligand>
        <name>substrate</name>
    </ligand>
</feature>
<feature type="binding site" evidence="2">
    <location>
        <position position="245"/>
    </location>
    <ligand>
        <name>substrate</name>
    </ligand>
</feature>
<feature type="binding site" evidence="2">
    <location>
        <position position="274"/>
    </location>
    <ligand>
        <name>substrate</name>
    </ligand>
</feature>
<gene>
    <name evidence="1" type="primary">mmgF</name>
    <name type="ordered locus">BH3922</name>
</gene>